<gene>
    <name evidence="1" type="primary">flower</name>
    <name type="ORF">GF10375</name>
</gene>
<proteinExistence type="inferred from homology"/>
<keyword id="KW-0106">Calcium</keyword>
<keyword id="KW-0107">Calcium channel</keyword>
<keyword id="KW-0109">Calcium transport</keyword>
<keyword id="KW-1003">Cell membrane</keyword>
<keyword id="KW-0966">Cell projection</keyword>
<keyword id="KW-0968">Cytoplasmic vesicle</keyword>
<keyword id="KW-0254">Endocytosis</keyword>
<keyword id="KW-0967">Endosome</keyword>
<keyword id="KW-0407">Ion channel</keyword>
<keyword id="KW-0406">Ion transport</keyword>
<keyword id="KW-0472">Membrane</keyword>
<keyword id="KW-1185">Reference proteome</keyword>
<keyword id="KW-0770">Synapse</keyword>
<keyword id="KW-0812">Transmembrane</keyword>
<keyword id="KW-1133">Transmembrane helix</keyword>
<keyword id="KW-0813">Transport</keyword>
<organism>
    <name type="scientific">Drosophila ananassae</name>
    <name type="common">Fruit fly</name>
    <dbReference type="NCBI Taxonomy" id="7217"/>
    <lineage>
        <taxon>Eukaryota</taxon>
        <taxon>Metazoa</taxon>
        <taxon>Ecdysozoa</taxon>
        <taxon>Arthropoda</taxon>
        <taxon>Hexapoda</taxon>
        <taxon>Insecta</taxon>
        <taxon>Pterygota</taxon>
        <taxon>Neoptera</taxon>
        <taxon>Endopterygota</taxon>
        <taxon>Diptera</taxon>
        <taxon>Brachycera</taxon>
        <taxon>Muscomorpha</taxon>
        <taxon>Ephydroidea</taxon>
        <taxon>Drosophilidae</taxon>
        <taxon>Drosophila</taxon>
        <taxon>Sophophora</taxon>
    </lineage>
</organism>
<reference evidence="4" key="1">
    <citation type="journal article" date="2007" name="Nature">
        <title>Evolution of genes and genomes on the Drosophila phylogeny.</title>
        <authorList>
            <consortium name="Drosophila 12 genomes consortium"/>
        </authorList>
    </citation>
    <scope>NUCLEOTIDE SEQUENCE [LARGE SCALE GENOMIC DNA]</scope>
    <source>
        <strain evidence="4">Tucson 14024-0371.13</strain>
    </source>
</reference>
<evidence type="ECO:0000250" key="1">
    <source>
        <dbReference type="UniProtKB" id="Q95T12"/>
    </source>
</evidence>
<evidence type="ECO:0000255" key="2"/>
<evidence type="ECO:0000305" key="3"/>
<evidence type="ECO:0000312" key="4">
    <source>
        <dbReference type="EMBL" id="EDV40152.1"/>
    </source>
</evidence>
<name>FLOWR_DROAN</name>
<protein>
    <recommendedName>
        <fullName evidence="1">Calcium channel flower</fullName>
    </recommendedName>
</protein>
<sequence>MSFAEKITGLLARPNQQDPVGPEQPWYLKYGSRLLGIVAAFFAILFGLWNVISILTLNVGCLVAGIIQMVAGFVVMLLEAPCCFVCIEKVNDIADKVDSKPMYFRAGLYCAMAVPPIFMCFGLASLFGSGLIFATGVIYGMMALGKKASAEDMRAAAQQSYAGNATPQTTNDRAGIVNNAQPFSFTGAVGTDSNV</sequence>
<comment type="function">
    <text evidence="1">Transmembrane protein which mediates synaptic endocytosis, fitness-based cell culling, neuronal culling, morphogen gradient scaling, and calcium transport. Regulates synaptic endocytosis and hence couples exo- with endocytosis. Controls two major modes of synaptic vesicle (SV) endocytosis in the synaptic boutons of neuromuscular junctions (NMJs); Ca(2+) channel-independent Clathrin-mediated endocytosis (CME) in response to mild stimulation, and Ca(2+) channel-dependent activity-dependent bulk endocytosis (ADBE) in response to strong stimulation. Functions in ADBE and subsequent SV reformation from bulk endosomes by initiating Ca(2+) channel-dependent phosphatidylinositol 4,5-bisphosphate (PtdIns(4,5)P2) compartmentalization in synaptic boutons. There it acts at the periactive zone to provide the low Ca(2+) levels required to initiate Calcineurin activation and upregulate PtdIns(4,5)P2. Conversely PtdIns(4,5)P2 enhances fwe Ca(2+) channel-activity, establishing a positive feedback loop that induces PtdIns(4,5)P2 microdomain at the periactive zone. These microdomains trigger bulk membrane invagination (i.e. ADBE) by triggering actin polymerization while also promoting localization of fwe to bulk endosomes, thereby removing the ADBE trigger to reduce endocytosis and prevent excess membrane uptake. PtdIns(4,5)P2 then promotes SV reformation from the bulk endosomes, to coordinate ADBE and subsequent SV reformation. Different combinations of the flower isoforms at the cell membrane are also required for the identification and elimination of suboptimal or supernumerary cells during development, regeneration, and adulthood. Required for the recognition and elimination of unfit cells in the developing wing during cell competition. In the developing pupal retina, mediates the elimination of unwanted postmitotic neurons, including supernumerary photoreceptor neurons that form at the periphery of the retina and are contained within incomplete ommatidia units. Also required for efficient elimination and replacement of old neurons by newly generated neurons during regeneration in the adult brain following mechanical injury. Downstream of the flower fitness fingerprints, cells identified as unwanted or unfit are eliminated via apoptosis through the expression of ahuizotl (azot). However, the cells marked for elimination by the flower isoforms only undergo apoptosis if additional thresholds are met; (1) their neighboring fit/healthy cells express different levels of the fwe isoforms, and (2) the levels of the protective signal SPARC expressed by the loser or unwanted cells are unable to inhibit caspase activation. These additional thresholds for flower-mediated apoptosis, allows useful cells to recover from transient and limited stress before they are unnecessarily eliminated. Functions with dally and magu in a mechanism of scaling, which utilises apoptosis to ensure that the dpp morphogen gradient, which mediates organ growth, remains proportional to the size of the growing wing. In this mechanism, fwe represses dally- and Magu-dependent activity in expanding the gradient, and dally/Magu inhibits fwe-dependent apoptosis to keep cell death rate low. When the levels of these different proteins are optimally regulated the gradient correctly scales with organ growth but when this fails, fwe-mediated apoptosis is activated to trim the developing tissue to match the correct size of the gradient.</text>
</comment>
<comment type="activity regulation">
    <text evidence="1">Channel activity is inhibited by La(3+), which reduces Ca(2+) influx and thus inhibits it's function in promoting activity-dependent bulk endocytosis (ADBE) in response to high stimuli.</text>
</comment>
<comment type="subunit">
    <text evidence="1">Homomultimer. Associates with the dally/ magu complex.</text>
</comment>
<comment type="subcellular location">
    <subcellularLocation>
        <location evidence="2">Cell membrane</location>
        <topology evidence="2">Multi-pass membrane protein</topology>
    </subcellularLocation>
    <subcellularLocation>
        <location evidence="1">Cytoplasmic vesicle</location>
        <location evidence="1">Secretory vesicle</location>
        <location evidence="1">Synaptic vesicle membrane</location>
        <topology evidence="1">Multi-pass membrane protein</topology>
    </subcellularLocation>
    <subcellularLocation>
        <location evidence="1">Presynaptic cell membrane</location>
    </subcellularLocation>
    <subcellularLocation>
        <location evidence="1">Endosome</location>
    </subcellularLocation>
    <text evidence="1">Upon fusion of the synaptic vesicle (SV) with the presynaptic membrane, protein transfers from the SV to the periactive zones where endocytosis is known to occur. Upon high K(+) stimulation, expression levels in NMJ boutons are higher in bulk endosomes than in synaptic vesicles, suggesting that it is recycled to bulk endosomes after it activates ADBE.</text>
</comment>
<comment type="similarity">
    <text evidence="3">Belongs to the calcium channel flower family.</text>
</comment>
<comment type="sequence caution" evidence="3">
    <conflict type="erroneous gene model prediction">
        <sequence resource="EMBL-CDS" id="EDV40152"/>
    </conflict>
</comment>
<dbReference type="EMBL" id="CH902618">
    <property type="protein sequence ID" value="EDV40152.1"/>
    <property type="status" value="ALT_SEQ"/>
    <property type="molecule type" value="Genomic_DNA"/>
</dbReference>
<dbReference type="SMR" id="B3M9W1"/>
<dbReference type="FunCoup" id="B3M9W1">
    <property type="interactions" value="781"/>
</dbReference>
<dbReference type="EnsemblMetazoa" id="FBtr0115075">
    <property type="protein sequence ID" value="FBpp0113567"/>
    <property type="gene ID" value="FBgn0087416"/>
</dbReference>
<dbReference type="EnsemblMetazoa" id="XM_001957310.4">
    <property type="protein sequence ID" value="XP_001957346.2"/>
    <property type="gene ID" value="LOC6493245"/>
</dbReference>
<dbReference type="GeneID" id="6493245"/>
<dbReference type="KEGG" id="dan:6493245"/>
<dbReference type="CTD" id="39720"/>
<dbReference type="eggNOG" id="KOG4085">
    <property type="taxonomic scope" value="Eukaryota"/>
</dbReference>
<dbReference type="InParanoid" id="B3M9W1"/>
<dbReference type="OrthoDB" id="9934994at2759"/>
<dbReference type="Proteomes" id="UP000007801">
    <property type="component" value="Unassembled WGS sequence"/>
</dbReference>
<dbReference type="GO" id="GO:0042995">
    <property type="term" value="C:cell projection"/>
    <property type="evidence" value="ECO:0007669"/>
    <property type="project" value="UniProtKB-KW"/>
</dbReference>
<dbReference type="GO" id="GO:0005768">
    <property type="term" value="C:endosome"/>
    <property type="evidence" value="ECO:0007669"/>
    <property type="project" value="UniProtKB-SubCell"/>
</dbReference>
<dbReference type="GO" id="GO:0042734">
    <property type="term" value="C:presynaptic membrane"/>
    <property type="evidence" value="ECO:0007669"/>
    <property type="project" value="UniProtKB-SubCell"/>
</dbReference>
<dbReference type="GO" id="GO:0030672">
    <property type="term" value="C:synaptic vesicle membrane"/>
    <property type="evidence" value="ECO:0000250"/>
    <property type="project" value="UniProtKB"/>
</dbReference>
<dbReference type="GO" id="GO:0005262">
    <property type="term" value="F:calcium channel activity"/>
    <property type="evidence" value="ECO:0007669"/>
    <property type="project" value="UniProtKB-KW"/>
</dbReference>
<dbReference type="GO" id="GO:0046530">
    <property type="term" value="P:photoreceptor cell differentiation"/>
    <property type="evidence" value="ECO:0000250"/>
    <property type="project" value="UniProtKB"/>
</dbReference>
<dbReference type="GO" id="GO:0048488">
    <property type="term" value="P:synaptic vesicle endocytosis"/>
    <property type="evidence" value="ECO:0000250"/>
    <property type="project" value="UniProtKB"/>
</dbReference>
<dbReference type="InterPro" id="IPR019365">
    <property type="entry name" value="TVP18/Ca-channel_flower"/>
</dbReference>
<dbReference type="PANTHER" id="PTHR13314">
    <property type="entry name" value="CALCIUM CHANNEL FLOWER HOMOLOG"/>
    <property type="match status" value="1"/>
</dbReference>
<dbReference type="PANTHER" id="PTHR13314:SF2">
    <property type="entry name" value="CALCIUM CHANNEL FLOWER HOMOLOG"/>
    <property type="match status" value="1"/>
</dbReference>
<dbReference type="Pfam" id="PF10233">
    <property type="entry name" value="Cg6151-P"/>
    <property type="match status" value="1"/>
</dbReference>
<dbReference type="SMART" id="SM01077">
    <property type="entry name" value="Cg6151-P"/>
    <property type="match status" value="1"/>
</dbReference>
<feature type="chain" id="PRO_0000389231" description="Calcium channel flower">
    <location>
        <begin position="1"/>
        <end position="195"/>
    </location>
</feature>
<feature type="transmembrane region" description="Helical" evidence="2">
    <location>
        <begin position="34"/>
        <end position="54"/>
    </location>
</feature>
<feature type="transmembrane region" description="Helical" evidence="2">
    <location>
        <begin position="66"/>
        <end position="88"/>
    </location>
</feature>
<feature type="transmembrane region" description="Helical" evidence="2">
    <location>
        <begin position="117"/>
        <end position="137"/>
    </location>
</feature>
<feature type="site" description="Calcium ion selectivity" evidence="1">
    <location>
        <position position="79"/>
    </location>
</feature>
<accession>B3M9W1</accession>